<accession>Q5ZJ01</accession>
<name>AB17B_CHICK</name>
<comment type="function">
    <text evidence="2 3">Hydrolyzes fatty acids from S-acylated cysteine residues in proteins. Has depalmitoylating activity towards NRAS.</text>
</comment>
<comment type="catalytic activity">
    <reaction evidence="3">
        <text>S-hexadecanoyl-L-cysteinyl-[protein] + H2O = L-cysteinyl-[protein] + hexadecanoate + H(+)</text>
        <dbReference type="Rhea" id="RHEA:19233"/>
        <dbReference type="Rhea" id="RHEA-COMP:10131"/>
        <dbReference type="Rhea" id="RHEA-COMP:11032"/>
        <dbReference type="ChEBI" id="CHEBI:7896"/>
        <dbReference type="ChEBI" id="CHEBI:15377"/>
        <dbReference type="ChEBI" id="CHEBI:15378"/>
        <dbReference type="ChEBI" id="CHEBI:29950"/>
        <dbReference type="ChEBI" id="CHEBI:74151"/>
        <dbReference type="EC" id="3.1.2.22"/>
    </reaction>
</comment>
<comment type="subcellular location">
    <subcellularLocation>
        <location evidence="3">Cell membrane</location>
        <topology evidence="3">Lipid-anchor</topology>
        <orientation evidence="3">Cytoplasmic side</orientation>
    </subcellularLocation>
    <subcellularLocation>
        <location evidence="3">Recycling endosome membrane</location>
        <topology evidence="3">Lipid-anchor</topology>
        <orientation evidence="3">Cytoplasmic side</orientation>
    </subcellularLocation>
    <subcellularLocation>
        <location evidence="3">Cell projection</location>
        <location evidence="3">Dendritic spine</location>
    </subcellularLocation>
    <subcellularLocation>
        <location evidence="3">Postsynaptic density membrane</location>
    </subcellularLocation>
</comment>
<comment type="PTM">
    <text evidence="3">Palmitoylated on cysteine residues located in a cysteine cluster at the N-terminus which promotes membrane localization.</text>
</comment>
<comment type="similarity">
    <text evidence="5">Belongs to the AB hydrolase superfamily. ABHD17 family.</text>
</comment>
<organism>
    <name type="scientific">Gallus gallus</name>
    <name type="common">Chicken</name>
    <dbReference type="NCBI Taxonomy" id="9031"/>
    <lineage>
        <taxon>Eukaryota</taxon>
        <taxon>Metazoa</taxon>
        <taxon>Chordata</taxon>
        <taxon>Craniata</taxon>
        <taxon>Vertebrata</taxon>
        <taxon>Euteleostomi</taxon>
        <taxon>Archelosauria</taxon>
        <taxon>Archosauria</taxon>
        <taxon>Dinosauria</taxon>
        <taxon>Saurischia</taxon>
        <taxon>Theropoda</taxon>
        <taxon>Coelurosauria</taxon>
        <taxon>Aves</taxon>
        <taxon>Neognathae</taxon>
        <taxon>Galloanserae</taxon>
        <taxon>Galliformes</taxon>
        <taxon>Phasianidae</taxon>
        <taxon>Phasianinae</taxon>
        <taxon>Gallus</taxon>
    </lineage>
</organism>
<reference key="1">
    <citation type="journal article" date="2005" name="Genome Biol.">
        <title>Full-length cDNAs from chicken bursal lymphocytes to facilitate gene function analysis.</title>
        <authorList>
            <person name="Caldwell R.B."/>
            <person name="Kierzek A.M."/>
            <person name="Arakawa H."/>
            <person name="Bezzubov Y."/>
            <person name="Zaim J."/>
            <person name="Fiedler P."/>
            <person name="Kutter S."/>
            <person name="Blagodatski A."/>
            <person name="Kostovska D."/>
            <person name="Koter M."/>
            <person name="Plachy J."/>
            <person name="Carninci P."/>
            <person name="Hayashizaki Y."/>
            <person name="Buerstedde J.-M."/>
        </authorList>
    </citation>
    <scope>NUCLEOTIDE SEQUENCE [LARGE SCALE MRNA]</scope>
    <source>
        <strain>CB</strain>
        <tissue>Bursa of Fabricius</tissue>
    </source>
</reference>
<sequence>MNNLSFSELCCLFCCPPCPGKIASKLAFLPPDPTYTLMCDESGSRWTLHLSERADWQYSSREKDAIECFMTRTSKGNRIACMFVRCSPNAKYTLLFSHGNAVDLGQMSSFYIGLGSRINCNIFSYDYSGYGASSGKPSEKNLYADIDAAWVALRTRYGIRPENVIIYGQSIGTVPSVDLAARYESAAVILHSPLTSGMRVAFPDTKKTYCFDAFPNIDKISKITSPVLIIHGTEDEVIDFSHGLALFERCQRPVEPLWVEGAGHNDVELYGQYLERLKRFVSQELVNL</sequence>
<dbReference type="EC" id="3.1.2.22" evidence="2"/>
<dbReference type="EMBL" id="AJ720633">
    <property type="protein sequence ID" value="CAG32292.1"/>
    <property type="molecule type" value="mRNA"/>
</dbReference>
<dbReference type="RefSeq" id="NP_001026594.1">
    <property type="nucleotide sequence ID" value="NM_001031423.2"/>
</dbReference>
<dbReference type="RefSeq" id="XP_015135774.1">
    <property type="nucleotide sequence ID" value="XM_015280288.4"/>
</dbReference>
<dbReference type="RefSeq" id="XP_040511480.1">
    <property type="nucleotide sequence ID" value="XM_040655546.2"/>
</dbReference>
<dbReference type="RefSeq" id="XP_046761327.1">
    <property type="nucleotide sequence ID" value="XM_046905371.1"/>
</dbReference>
<dbReference type="RefSeq" id="XP_046791055.1">
    <property type="nucleotide sequence ID" value="XM_046935099.1"/>
</dbReference>
<dbReference type="RefSeq" id="XP_046791056.1">
    <property type="nucleotide sequence ID" value="XM_046935100.1"/>
</dbReference>
<dbReference type="RefSeq" id="XP_046791057.1">
    <property type="nucleotide sequence ID" value="XM_046935101.1"/>
</dbReference>
<dbReference type="SMR" id="Q5ZJ01"/>
<dbReference type="FunCoup" id="Q5ZJ01">
    <property type="interactions" value="1183"/>
</dbReference>
<dbReference type="ESTHER" id="chick-q5zj01">
    <property type="family name" value="ABHD17-depalmitoylase"/>
</dbReference>
<dbReference type="MEROPS" id="S09.055"/>
<dbReference type="PaxDb" id="9031-ENSGALP00000042466"/>
<dbReference type="Ensembl" id="ENSGALT00010034101.1">
    <property type="protein sequence ID" value="ENSGALP00010020042.1"/>
    <property type="gene ID" value="ENSGALG00010014176.1"/>
</dbReference>
<dbReference type="GeneID" id="427252"/>
<dbReference type="KEGG" id="gga:427252"/>
<dbReference type="CTD" id="51104"/>
<dbReference type="VEuPathDB" id="HostDB:geneid_427252"/>
<dbReference type="eggNOG" id="KOG1552">
    <property type="taxonomic scope" value="Eukaryota"/>
</dbReference>
<dbReference type="GeneTree" id="ENSGT00940000157611"/>
<dbReference type="InParanoid" id="Q5ZJ01"/>
<dbReference type="OMA" id="GENIYML"/>
<dbReference type="OrthoDB" id="446723at2759"/>
<dbReference type="PhylomeDB" id="Q5ZJ01"/>
<dbReference type="TreeFam" id="TF314365"/>
<dbReference type="Reactome" id="R-GGA-9648002">
    <property type="pathway name" value="RAS processing"/>
</dbReference>
<dbReference type="PRO" id="PR:Q5ZJ01"/>
<dbReference type="Proteomes" id="UP000000539">
    <property type="component" value="Chromosome Z"/>
</dbReference>
<dbReference type="Bgee" id="ENSGALG00000015138">
    <property type="expression patterns" value="Expressed in spermatocyte and 12 other cell types or tissues"/>
</dbReference>
<dbReference type="GO" id="GO:0043197">
    <property type="term" value="C:dendritic spine"/>
    <property type="evidence" value="ECO:0007669"/>
    <property type="project" value="UniProtKB-SubCell"/>
</dbReference>
<dbReference type="GO" id="GO:0010008">
    <property type="term" value="C:endosome membrane"/>
    <property type="evidence" value="ECO:0000318"/>
    <property type="project" value="GO_Central"/>
</dbReference>
<dbReference type="GO" id="GO:0005886">
    <property type="term" value="C:plasma membrane"/>
    <property type="evidence" value="ECO:0000318"/>
    <property type="project" value="GO_Central"/>
</dbReference>
<dbReference type="GO" id="GO:0098839">
    <property type="term" value="C:postsynaptic density membrane"/>
    <property type="evidence" value="ECO:0007669"/>
    <property type="project" value="UniProtKB-SubCell"/>
</dbReference>
<dbReference type="GO" id="GO:0055038">
    <property type="term" value="C:recycling endosome membrane"/>
    <property type="evidence" value="ECO:0007669"/>
    <property type="project" value="UniProtKB-SubCell"/>
</dbReference>
<dbReference type="GO" id="GO:0008474">
    <property type="term" value="F:palmitoyl-(protein) hydrolase activity"/>
    <property type="evidence" value="ECO:0000318"/>
    <property type="project" value="GO_Central"/>
</dbReference>
<dbReference type="GO" id="GO:1902817">
    <property type="term" value="P:negative regulation of protein localization to microtubule"/>
    <property type="evidence" value="ECO:0007669"/>
    <property type="project" value="Ensembl"/>
</dbReference>
<dbReference type="GO" id="GO:1905668">
    <property type="term" value="P:positive regulation of protein localization to endosome"/>
    <property type="evidence" value="ECO:0007669"/>
    <property type="project" value="Ensembl"/>
</dbReference>
<dbReference type="GO" id="GO:1902950">
    <property type="term" value="P:regulation of dendritic spine maintenance"/>
    <property type="evidence" value="ECO:0007669"/>
    <property type="project" value="Ensembl"/>
</dbReference>
<dbReference type="GO" id="GO:0099175">
    <property type="term" value="P:regulation of postsynapse organization"/>
    <property type="evidence" value="ECO:0000318"/>
    <property type="project" value="GO_Central"/>
</dbReference>
<dbReference type="GO" id="GO:1902473">
    <property type="term" value="P:regulation of protein localization to synapse"/>
    <property type="evidence" value="ECO:0007669"/>
    <property type="project" value="Ensembl"/>
</dbReference>
<dbReference type="FunFam" id="3.40.50.1820:FF:000008">
    <property type="entry name" value="Alpha/beta hydrolase domain-containing protein 17B"/>
    <property type="match status" value="1"/>
</dbReference>
<dbReference type="Gene3D" id="3.40.50.1820">
    <property type="entry name" value="alpha/beta hydrolase"/>
    <property type="match status" value="1"/>
</dbReference>
<dbReference type="InterPro" id="IPR029058">
    <property type="entry name" value="AB_hydrolase_fold"/>
</dbReference>
<dbReference type="InterPro" id="IPR022742">
    <property type="entry name" value="Hydrolase_4"/>
</dbReference>
<dbReference type="PANTHER" id="PTHR12277">
    <property type="entry name" value="ALPHA/BETA HYDROLASE DOMAIN-CONTAINING PROTEIN"/>
    <property type="match status" value="1"/>
</dbReference>
<dbReference type="PANTHER" id="PTHR12277:SF48">
    <property type="entry name" value="ALPHA_BETA HYDROLASE DOMAIN-CONTAINING PROTEIN 17B"/>
    <property type="match status" value="1"/>
</dbReference>
<dbReference type="Pfam" id="PF12146">
    <property type="entry name" value="Hydrolase_4"/>
    <property type="match status" value="1"/>
</dbReference>
<dbReference type="SUPFAM" id="SSF53474">
    <property type="entry name" value="alpha/beta-Hydrolases"/>
    <property type="match status" value="1"/>
</dbReference>
<protein>
    <recommendedName>
        <fullName evidence="5">Alpha/beta hydrolase domain-containing protein 17B</fullName>
        <shortName evidence="2">Abhydrolase domain-containing protein 17B</shortName>
        <ecNumber evidence="2">3.1.2.22</ecNumber>
    </recommendedName>
</protein>
<proteinExistence type="evidence at transcript level"/>
<evidence type="ECO:0000250" key="1">
    <source>
        <dbReference type="UniProtKB" id="O75608"/>
    </source>
</evidence>
<evidence type="ECO:0000250" key="2">
    <source>
        <dbReference type="UniProtKB" id="Q5VST6"/>
    </source>
</evidence>
<evidence type="ECO:0000250" key="3">
    <source>
        <dbReference type="UniProtKB" id="Q7M759"/>
    </source>
</evidence>
<evidence type="ECO:0000250" key="4">
    <source>
        <dbReference type="UniProtKB" id="Q96GS6"/>
    </source>
</evidence>
<evidence type="ECO:0000305" key="5"/>
<gene>
    <name evidence="2" type="primary">ABHD17B</name>
    <name type="ORF">RCJMB04_22d6</name>
</gene>
<feature type="chain" id="PRO_0000281114" description="Alpha/beta hydrolase domain-containing protein 17B">
    <location>
        <begin position="1"/>
        <end position="288"/>
    </location>
</feature>
<feature type="active site" description="Charge relay system" evidence="4">
    <location>
        <position position="170"/>
    </location>
</feature>
<feature type="active site" description="Charge relay system" evidence="1">
    <location>
        <position position="235"/>
    </location>
</feature>
<feature type="active site" description="Charge relay system" evidence="1">
    <location>
        <position position="264"/>
    </location>
</feature>
<keyword id="KW-1003">Cell membrane</keyword>
<keyword id="KW-0966">Cell projection</keyword>
<keyword id="KW-0967">Endosome</keyword>
<keyword id="KW-0378">Hydrolase</keyword>
<keyword id="KW-0449">Lipoprotein</keyword>
<keyword id="KW-0472">Membrane</keyword>
<keyword id="KW-0564">Palmitate</keyword>
<keyword id="KW-0628">Postsynaptic cell membrane</keyword>
<keyword id="KW-1185">Reference proteome</keyword>
<keyword id="KW-0770">Synapse</keyword>